<keyword id="KW-0963">Cytoplasm</keyword>
<keyword id="KW-0570">Pentose shunt</keyword>
<keyword id="KW-0704">Schiff base</keyword>
<keyword id="KW-0808">Transferase</keyword>
<protein>
    <recommendedName>
        <fullName evidence="1">Probable transaldolase</fullName>
        <ecNumber evidence="1">2.2.1.2</ecNumber>
    </recommendedName>
</protein>
<comment type="function">
    <text evidence="1">Transaldolase is important for the balance of metabolites in the pentose-phosphate pathway.</text>
</comment>
<comment type="catalytic activity">
    <reaction evidence="1">
        <text>D-sedoheptulose 7-phosphate + D-glyceraldehyde 3-phosphate = D-erythrose 4-phosphate + beta-D-fructose 6-phosphate</text>
        <dbReference type="Rhea" id="RHEA:17053"/>
        <dbReference type="ChEBI" id="CHEBI:16897"/>
        <dbReference type="ChEBI" id="CHEBI:57483"/>
        <dbReference type="ChEBI" id="CHEBI:57634"/>
        <dbReference type="ChEBI" id="CHEBI:59776"/>
        <dbReference type="EC" id="2.2.1.2"/>
    </reaction>
</comment>
<comment type="pathway">
    <text evidence="1">Carbohydrate degradation; pentose phosphate pathway; D-glyceraldehyde 3-phosphate and beta-D-fructose 6-phosphate from D-ribose 5-phosphate and D-xylulose 5-phosphate (non-oxidative stage): step 2/3.</text>
</comment>
<comment type="subcellular location">
    <subcellularLocation>
        <location evidence="1">Cytoplasm</location>
    </subcellularLocation>
</comment>
<comment type="similarity">
    <text evidence="1">Belongs to the transaldolase family. Type 3B subfamily.</text>
</comment>
<name>TAL_BART1</name>
<feature type="chain" id="PRO_1000198465" description="Probable transaldolase">
    <location>
        <begin position="1"/>
        <end position="217"/>
    </location>
</feature>
<feature type="active site" description="Schiff-base intermediate with substrate" evidence="1">
    <location>
        <position position="83"/>
    </location>
</feature>
<reference key="1">
    <citation type="journal article" date="2007" name="Nat. Genet.">
        <title>Genomic analysis of Bartonella identifies type IV secretion systems as host adaptability factors.</title>
        <authorList>
            <person name="Saenz H.L."/>
            <person name="Engel P."/>
            <person name="Stoeckli M.C."/>
            <person name="Lanz C."/>
            <person name="Raddatz G."/>
            <person name="Vayssier-Taussat M."/>
            <person name="Birtles R."/>
            <person name="Schuster S.C."/>
            <person name="Dehio C."/>
        </authorList>
    </citation>
    <scope>NUCLEOTIDE SEQUENCE [LARGE SCALE GENOMIC DNA]</scope>
    <source>
        <strain>CIP 105476 / IBS 506</strain>
    </source>
</reference>
<organism>
    <name type="scientific">Bartonella tribocorum (strain CIP 105476 / IBS 506)</name>
    <dbReference type="NCBI Taxonomy" id="382640"/>
    <lineage>
        <taxon>Bacteria</taxon>
        <taxon>Pseudomonadati</taxon>
        <taxon>Pseudomonadota</taxon>
        <taxon>Alphaproteobacteria</taxon>
        <taxon>Hyphomicrobiales</taxon>
        <taxon>Bartonellaceae</taxon>
        <taxon>Bartonella</taxon>
    </lineage>
</organism>
<sequence>MKFFVDSANIEEIRELQNLSLVDGVTTNPSLILNSGRNILEVTKEICSLVKGPVSAEVAATEFEDMMKEAAVLAKVADNICIKLPLTLDGLKACKALTAEGLKTNLTLCFSANQALLAAKAGATFVSPFIGRLDDCGINGSELLHEIRTIYDNYNFETQILAASIRTVSHVKEAALSGADVATVPPAILKALITHPLTDKGLQIFLNDWKKTGQNIA</sequence>
<gene>
    <name evidence="1" type="primary">tal</name>
    <name type="ordered locus">BT_2476</name>
</gene>
<proteinExistence type="inferred from homology"/>
<dbReference type="EC" id="2.2.1.2" evidence="1"/>
<dbReference type="EMBL" id="AM260525">
    <property type="protein sequence ID" value="CAK02451.1"/>
    <property type="molecule type" value="Genomic_DNA"/>
</dbReference>
<dbReference type="RefSeq" id="WP_012232492.1">
    <property type="nucleotide sequence ID" value="NC_010161.1"/>
</dbReference>
<dbReference type="SMR" id="A9IYY3"/>
<dbReference type="KEGG" id="btr:BT_2476"/>
<dbReference type="eggNOG" id="COG0176">
    <property type="taxonomic scope" value="Bacteria"/>
</dbReference>
<dbReference type="HOGENOM" id="CLU_079764_0_0_5"/>
<dbReference type="UniPathway" id="UPA00115">
    <property type="reaction ID" value="UER00414"/>
</dbReference>
<dbReference type="Proteomes" id="UP000001592">
    <property type="component" value="Chromosome"/>
</dbReference>
<dbReference type="GO" id="GO:0005737">
    <property type="term" value="C:cytoplasm"/>
    <property type="evidence" value="ECO:0007669"/>
    <property type="project" value="UniProtKB-SubCell"/>
</dbReference>
<dbReference type="GO" id="GO:0016832">
    <property type="term" value="F:aldehyde-lyase activity"/>
    <property type="evidence" value="ECO:0007669"/>
    <property type="project" value="InterPro"/>
</dbReference>
<dbReference type="GO" id="GO:0004801">
    <property type="term" value="F:transaldolase activity"/>
    <property type="evidence" value="ECO:0007669"/>
    <property type="project" value="UniProtKB-UniRule"/>
</dbReference>
<dbReference type="GO" id="GO:0005975">
    <property type="term" value="P:carbohydrate metabolic process"/>
    <property type="evidence" value="ECO:0007669"/>
    <property type="project" value="InterPro"/>
</dbReference>
<dbReference type="GO" id="GO:0006098">
    <property type="term" value="P:pentose-phosphate shunt"/>
    <property type="evidence" value="ECO:0007669"/>
    <property type="project" value="UniProtKB-UniRule"/>
</dbReference>
<dbReference type="CDD" id="cd00956">
    <property type="entry name" value="Transaldolase_FSA"/>
    <property type="match status" value="1"/>
</dbReference>
<dbReference type="FunFam" id="3.20.20.70:FF:000018">
    <property type="entry name" value="Probable transaldolase"/>
    <property type="match status" value="1"/>
</dbReference>
<dbReference type="Gene3D" id="3.20.20.70">
    <property type="entry name" value="Aldolase class I"/>
    <property type="match status" value="1"/>
</dbReference>
<dbReference type="HAMAP" id="MF_00494">
    <property type="entry name" value="Transaldolase_3b"/>
    <property type="match status" value="1"/>
</dbReference>
<dbReference type="InterPro" id="IPR013785">
    <property type="entry name" value="Aldolase_TIM"/>
</dbReference>
<dbReference type="InterPro" id="IPR001585">
    <property type="entry name" value="TAL/FSA"/>
</dbReference>
<dbReference type="InterPro" id="IPR022999">
    <property type="entry name" value="Transaldolase_3B"/>
</dbReference>
<dbReference type="InterPro" id="IPR004731">
    <property type="entry name" value="Transaldolase_3B/F6P_aldolase"/>
</dbReference>
<dbReference type="InterPro" id="IPR018225">
    <property type="entry name" value="Transaldolase_AS"/>
</dbReference>
<dbReference type="InterPro" id="IPR033919">
    <property type="entry name" value="TSA/FSA_arc/bac"/>
</dbReference>
<dbReference type="NCBIfam" id="TIGR00875">
    <property type="entry name" value="fsa_talC_mipB"/>
    <property type="match status" value="1"/>
</dbReference>
<dbReference type="PANTHER" id="PTHR10683:SF40">
    <property type="entry name" value="FRUCTOSE-6-PHOSPHATE ALDOLASE 1-RELATED"/>
    <property type="match status" value="1"/>
</dbReference>
<dbReference type="PANTHER" id="PTHR10683">
    <property type="entry name" value="TRANSALDOLASE"/>
    <property type="match status" value="1"/>
</dbReference>
<dbReference type="Pfam" id="PF00923">
    <property type="entry name" value="TAL_FSA"/>
    <property type="match status" value="1"/>
</dbReference>
<dbReference type="SUPFAM" id="SSF51569">
    <property type="entry name" value="Aldolase"/>
    <property type="match status" value="1"/>
</dbReference>
<dbReference type="PROSITE" id="PS01054">
    <property type="entry name" value="TRANSALDOLASE_1"/>
    <property type="match status" value="1"/>
</dbReference>
<dbReference type="PROSITE" id="PS00958">
    <property type="entry name" value="TRANSALDOLASE_2"/>
    <property type="match status" value="1"/>
</dbReference>
<accession>A9IYY3</accession>
<evidence type="ECO:0000255" key="1">
    <source>
        <dbReference type="HAMAP-Rule" id="MF_00494"/>
    </source>
</evidence>